<gene>
    <name type="ordered locus">aq_142</name>
</gene>
<feature type="chain" id="PRO_0000186841" description="Uncharacterized protein aq_142">
    <location>
        <begin position="1"/>
        <end position="146"/>
    </location>
</feature>
<protein>
    <recommendedName>
        <fullName>Uncharacterized protein aq_142</fullName>
    </recommendedName>
</protein>
<dbReference type="EMBL" id="AE000657">
    <property type="protein sequence ID" value="AAC06501.1"/>
    <property type="molecule type" value="Genomic_DNA"/>
</dbReference>
<dbReference type="PIR" id="F70313">
    <property type="entry name" value="F70313"/>
</dbReference>
<dbReference type="RefSeq" id="NP_213097.1">
    <property type="nucleotide sequence ID" value="NC_000918.1"/>
</dbReference>
<dbReference type="RefSeq" id="WP_010880035.1">
    <property type="nucleotide sequence ID" value="NC_000918.1"/>
</dbReference>
<dbReference type="SMR" id="O66537"/>
<dbReference type="STRING" id="224324.aq_142"/>
<dbReference type="EnsemblBacteria" id="AAC06501">
    <property type="protein sequence ID" value="AAC06501"/>
    <property type="gene ID" value="aq_142"/>
</dbReference>
<dbReference type="KEGG" id="aae:aq_142"/>
<dbReference type="HOGENOM" id="CLU_1814907_0_0_0"/>
<dbReference type="InParanoid" id="O66537"/>
<dbReference type="OrthoDB" id="14940at2"/>
<dbReference type="Proteomes" id="UP000000798">
    <property type="component" value="Chromosome"/>
</dbReference>
<dbReference type="Gene3D" id="3.10.450.50">
    <property type="match status" value="1"/>
</dbReference>
<dbReference type="InterPro" id="IPR024267">
    <property type="entry name" value="DUF4878"/>
</dbReference>
<dbReference type="Pfam" id="PF12870">
    <property type="entry name" value="DUF4878"/>
    <property type="match status" value="1"/>
</dbReference>
<proteinExistence type="predicted"/>
<reference key="1">
    <citation type="journal article" date="1998" name="Nature">
        <title>The complete genome of the hyperthermophilic bacterium Aquifex aeolicus.</title>
        <authorList>
            <person name="Deckert G."/>
            <person name="Warren P.V."/>
            <person name="Gaasterland T."/>
            <person name="Young W.G."/>
            <person name="Lenox A.L."/>
            <person name="Graham D.E."/>
            <person name="Overbeek R."/>
            <person name="Snead M.A."/>
            <person name="Keller M."/>
            <person name="Aujay M."/>
            <person name="Huber R."/>
            <person name="Feldman R.A."/>
            <person name="Short J.M."/>
            <person name="Olsen G.J."/>
            <person name="Swanson R.V."/>
        </authorList>
    </citation>
    <scope>NUCLEOTIDE SEQUENCE [LARGE SCALE GENOMIC DNA]</scope>
    <source>
        <strain>VF5</strain>
    </source>
</reference>
<sequence length="146" mass="16321">MRNKVLIVLAVIAGALILKSCGEPYSGAKETVGEFMEEIAEGEGRDAIKYLYPAYRDELAKNFKLPVQFTEMKPSEVLACVLSTMGRNIDEVEIKKAIAVNPNTANVVVKVEDKEGIEKFFSFTVVKEGDKWYIAKIEKYIPQVGR</sequence>
<organism>
    <name type="scientific">Aquifex aeolicus (strain VF5)</name>
    <dbReference type="NCBI Taxonomy" id="224324"/>
    <lineage>
        <taxon>Bacteria</taxon>
        <taxon>Pseudomonadati</taxon>
        <taxon>Aquificota</taxon>
        <taxon>Aquificia</taxon>
        <taxon>Aquificales</taxon>
        <taxon>Aquificaceae</taxon>
        <taxon>Aquifex</taxon>
    </lineage>
</organism>
<name>Y142_AQUAE</name>
<keyword id="KW-1185">Reference proteome</keyword>
<accession>O66537</accession>